<evidence type="ECO:0000255" key="1">
    <source>
        <dbReference type="HAMAP-Rule" id="MF_01013"/>
    </source>
</evidence>
<comment type="function">
    <text evidence="1">IGPS catalyzes the conversion of PRFAR and glutamine to IGP, AICAR and glutamate. The HisF subunit catalyzes the cyclization activity that produces IGP and AICAR from PRFAR using the ammonia provided by the HisH subunit.</text>
</comment>
<comment type="catalytic activity">
    <reaction evidence="1">
        <text>5-[(5-phospho-1-deoxy-D-ribulos-1-ylimino)methylamino]-1-(5-phospho-beta-D-ribosyl)imidazole-4-carboxamide + L-glutamine = D-erythro-1-(imidazol-4-yl)glycerol 3-phosphate + 5-amino-1-(5-phospho-beta-D-ribosyl)imidazole-4-carboxamide + L-glutamate + H(+)</text>
        <dbReference type="Rhea" id="RHEA:24793"/>
        <dbReference type="ChEBI" id="CHEBI:15378"/>
        <dbReference type="ChEBI" id="CHEBI:29985"/>
        <dbReference type="ChEBI" id="CHEBI:58278"/>
        <dbReference type="ChEBI" id="CHEBI:58359"/>
        <dbReference type="ChEBI" id="CHEBI:58475"/>
        <dbReference type="ChEBI" id="CHEBI:58525"/>
        <dbReference type="EC" id="4.3.2.10"/>
    </reaction>
</comment>
<comment type="pathway">
    <text evidence="1">Amino-acid biosynthesis; L-histidine biosynthesis; L-histidine from 5-phospho-alpha-D-ribose 1-diphosphate: step 5/9.</text>
</comment>
<comment type="subunit">
    <text evidence="1">Heterodimer of HisH and HisF.</text>
</comment>
<comment type="subcellular location">
    <subcellularLocation>
        <location evidence="1">Cytoplasm</location>
    </subcellularLocation>
</comment>
<comment type="similarity">
    <text evidence="1">Belongs to the HisA/HisF family.</text>
</comment>
<dbReference type="EC" id="4.3.2.10" evidence="1"/>
<dbReference type="EMBL" id="CP000685">
    <property type="protein sequence ID" value="ABQ05893.1"/>
    <property type="molecule type" value="Genomic_DNA"/>
</dbReference>
<dbReference type="RefSeq" id="WP_012024931.1">
    <property type="nucleotide sequence ID" value="NC_009441.1"/>
</dbReference>
<dbReference type="SMR" id="A5FFX6"/>
<dbReference type="STRING" id="376686.Fjoh_2872"/>
<dbReference type="KEGG" id="fjo:Fjoh_2872"/>
<dbReference type="eggNOG" id="COG0107">
    <property type="taxonomic scope" value="Bacteria"/>
</dbReference>
<dbReference type="HOGENOM" id="CLU_048577_4_0_10"/>
<dbReference type="OrthoDB" id="9781903at2"/>
<dbReference type="UniPathway" id="UPA00031">
    <property type="reaction ID" value="UER00010"/>
</dbReference>
<dbReference type="Proteomes" id="UP000006694">
    <property type="component" value="Chromosome"/>
</dbReference>
<dbReference type="GO" id="GO:0005737">
    <property type="term" value="C:cytoplasm"/>
    <property type="evidence" value="ECO:0007669"/>
    <property type="project" value="UniProtKB-SubCell"/>
</dbReference>
<dbReference type="GO" id="GO:0000107">
    <property type="term" value="F:imidazoleglycerol-phosphate synthase activity"/>
    <property type="evidence" value="ECO:0007669"/>
    <property type="project" value="UniProtKB-UniRule"/>
</dbReference>
<dbReference type="GO" id="GO:0016829">
    <property type="term" value="F:lyase activity"/>
    <property type="evidence" value="ECO:0007669"/>
    <property type="project" value="UniProtKB-KW"/>
</dbReference>
<dbReference type="GO" id="GO:0000105">
    <property type="term" value="P:L-histidine biosynthetic process"/>
    <property type="evidence" value="ECO:0007669"/>
    <property type="project" value="UniProtKB-UniRule"/>
</dbReference>
<dbReference type="CDD" id="cd04731">
    <property type="entry name" value="HisF"/>
    <property type="match status" value="1"/>
</dbReference>
<dbReference type="FunFam" id="3.20.20.70:FF:000006">
    <property type="entry name" value="Imidazole glycerol phosphate synthase subunit HisF"/>
    <property type="match status" value="1"/>
</dbReference>
<dbReference type="Gene3D" id="3.20.20.70">
    <property type="entry name" value="Aldolase class I"/>
    <property type="match status" value="1"/>
</dbReference>
<dbReference type="HAMAP" id="MF_01013">
    <property type="entry name" value="HisF"/>
    <property type="match status" value="1"/>
</dbReference>
<dbReference type="InterPro" id="IPR013785">
    <property type="entry name" value="Aldolase_TIM"/>
</dbReference>
<dbReference type="InterPro" id="IPR006062">
    <property type="entry name" value="His_biosynth"/>
</dbReference>
<dbReference type="InterPro" id="IPR004651">
    <property type="entry name" value="HisF"/>
</dbReference>
<dbReference type="InterPro" id="IPR050064">
    <property type="entry name" value="IGPS_HisA/HisF"/>
</dbReference>
<dbReference type="InterPro" id="IPR011060">
    <property type="entry name" value="RibuloseP-bd_barrel"/>
</dbReference>
<dbReference type="NCBIfam" id="TIGR00735">
    <property type="entry name" value="hisF"/>
    <property type="match status" value="1"/>
</dbReference>
<dbReference type="PANTHER" id="PTHR21235:SF2">
    <property type="entry name" value="IMIDAZOLE GLYCEROL PHOSPHATE SYNTHASE HISHF"/>
    <property type="match status" value="1"/>
</dbReference>
<dbReference type="PANTHER" id="PTHR21235">
    <property type="entry name" value="IMIDAZOLE GLYCEROL PHOSPHATE SYNTHASE SUBUNIT HISF/H IGP SYNTHASE SUBUNIT HISF/H"/>
    <property type="match status" value="1"/>
</dbReference>
<dbReference type="Pfam" id="PF00977">
    <property type="entry name" value="His_biosynth"/>
    <property type="match status" value="1"/>
</dbReference>
<dbReference type="SUPFAM" id="SSF51366">
    <property type="entry name" value="Ribulose-phoshate binding barrel"/>
    <property type="match status" value="1"/>
</dbReference>
<accession>A5FFX6</accession>
<feature type="chain" id="PRO_1000084059" description="Imidazole glycerol phosphate synthase subunit HisF">
    <location>
        <begin position="1"/>
        <end position="251"/>
    </location>
</feature>
<feature type="active site" evidence="1">
    <location>
        <position position="11"/>
    </location>
</feature>
<feature type="active site" evidence="1">
    <location>
        <position position="130"/>
    </location>
</feature>
<protein>
    <recommendedName>
        <fullName evidence="1">Imidazole glycerol phosphate synthase subunit HisF</fullName>
        <ecNumber evidence="1">4.3.2.10</ecNumber>
    </recommendedName>
    <alternativeName>
        <fullName evidence="1">IGP synthase cyclase subunit</fullName>
    </alternativeName>
    <alternativeName>
        <fullName evidence="1">IGP synthase subunit HisF</fullName>
    </alternativeName>
    <alternativeName>
        <fullName evidence="1">ImGP synthase subunit HisF</fullName>
        <shortName evidence="1">IGPS subunit HisF</shortName>
    </alternativeName>
</protein>
<gene>
    <name evidence="1" type="primary">hisF</name>
    <name type="ordered locus">Fjoh_2872</name>
</gene>
<reference key="1">
    <citation type="journal article" date="2009" name="Appl. Environ. Microbiol.">
        <title>Novel features of the polysaccharide-digesting gliding bacterium Flavobacterium johnsoniae as revealed by genome sequence analysis.</title>
        <authorList>
            <person name="McBride M.J."/>
            <person name="Xie G."/>
            <person name="Martens E.C."/>
            <person name="Lapidus A."/>
            <person name="Henrissat B."/>
            <person name="Rhodes R.G."/>
            <person name="Goltsman E."/>
            <person name="Wang W."/>
            <person name="Xu J."/>
            <person name="Hunnicutt D.W."/>
            <person name="Staroscik A.M."/>
            <person name="Hoover T.R."/>
            <person name="Cheng Y.Q."/>
            <person name="Stein J.L."/>
        </authorList>
    </citation>
    <scope>NUCLEOTIDE SEQUENCE [LARGE SCALE GENOMIC DNA]</scope>
    <source>
        <strain>ATCC 17061 / DSM 2064 / JCM 8514 / BCRC 14874 / CCUG 350202 / NBRC 14942 / NCIMB 11054 / UW101</strain>
    </source>
</reference>
<organism>
    <name type="scientific">Flavobacterium johnsoniae (strain ATCC 17061 / DSM 2064 / JCM 8514 / BCRC 14874 / CCUG 350202 / NBRC 14942 / NCIMB 11054 / UW101)</name>
    <name type="common">Cytophaga johnsonae</name>
    <dbReference type="NCBI Taxonomy" id="376686"/>
    <lineage>
        <taxon>Bacteria</taxon>
        <taxon>Pseudomonadati</taxon>
        <taxon>Bacteroidota</taxon>
        <taxon>Flavobacteriia</taxon>
        <taxon>Flavobacteriales</taxon>
        <taxon>Flavobacteriaceae</taxon>
        <taxon>Flavobacterium</taxon>
    </lineage>
</organism>
<proteinExistence type="inferred from homology"/>
<sequence>MLAKRIIPCLDIKNGRTVKGVNFVDLRDAGDPVELAEIYSREGADELVFLDISATEERRKTLVNMVRSVAEKINIPFTVGGGISSVEDVDILLNNGADKVSINSSAVKNPQLINDLAQKFGSQCVVVAIDAKQIDGQWIVHLVGGKVPTELNLFDWAVEVAERGAGEILFTSMDNDGTKNGFANEALAKLSELVNIPIIASGGAGNIQHFVDSFKEGKADAALAASVFHFKEIEIKALKQELRKNGVEVRL</sequence>
<keyword id="KW-0028">Amino-acid biosynthesis</keyword>
<keyword id="KW-0963">Cytoplasm</keyword>
<keyword id="KW-0368">Histidine biosynthesis</keyword>
<keyword id="KW-0456">Lyase</keyword>
<name>HIS6_FLAJ1</name>